<sequence length="136" mass="15425">MLQPKRMKFRKMFKGRNRGLANGTEVSFGDFGLKAVGRGRLTARQIEAARRAMTRHIKRQGQIWIRVFPDKPITSKPLEVRMGKGKGNVEYWVCQIQPGKVLYEMDGVSEELAREAFALAAAKLPLKTTFVTKTVM</sequence>
<comment type="function">
    <text evidence="1">Binds 23S rRNA and is also seen to make contacts with the A and possibly P site tRNAs.</text>
</comment>
<comment type="subunit">
    <text evidence="1">Part of the 50S ribosomal subunit.</text>
</comment>
<comment type="similarity">
    <text evidence="1">Belongs to the universal ribosomal protein uL16 family.</text>
</comment>
<name>RL16_SHEWM</name>
<keyword id="KW-1185">Reference proteome</keyword>
<keyword id="KW-0687">Ribonucleoprotein</keyword>
<keyword id="KW-0689">Ribosomal protein</keyword>
<keyword id="KW-0694">RNA-binding</keyword>
<keyword id="KW-0699">rRNA-binding</keyword>
<keyword id="KW-0820">tRNA-binding</keyword>
<feature type="chain" id="PRO_1000143029" description="Large ribosomal subunit protein uL16">
    <location>
        <begin position="1"/>
        <end position="136"/>
    </location>
</feature>
<proteinExistence type="inferred from homology"/>
<evidence type="ECO:0000255" key="1">
    <source>
        <dbReference type="HAMAP-Rule" id="MF_01342"/>
    </source>
</evidence>
<evidence type="ECO:0000305" key="2"/>
<dbReference type="EMBL" id="CP000961">
    <property type="protein sequence ID" value="ACA88933.1"/>
    <property type="molecule type" value="Genomic_DNA"/>
</dbReference>
<dbReference type="RefSeq" id="WP_012327255.1">
    <property type="nucleotide sequence ID" value="NC_010506.1"/>
</dbReference>
<dbReference type="SMR" id="B1KMX6"/>
<dbReference type="STRING" id="392500.Swoo_4683"/>
<dbReference type="KEGG" id="swd:Swoo_4683"/>
<dbReference type="eggNOG" id="COG0197">
    <property type="taxonomic scope" value="Bacteria"/>
</dbReference>
<dbReference type="HOGENOM" id="CLU_078858_2_1_6"/>
<dbReference type="Proteomes" id="UP000002168">
    <property type="component" value="Chromosome"/>
</dbReference>
<dbReference type="GO" id="GO:0022625">
    <property type="term" value="C:cytosolic large ribosomal subunit"/>
    <property type="evidence" value="ECO:0007669"/>
    <property type="project" value="TreeGrafter"/>
</dbReference>
<dbReference type="GO" id="GO:0019843">
    <property type="term" value="F:rRNA binding"/>
    <property type="evidence" value="ECO:0007669"/>
    <property type="project" value="UniProtKB-UniRule"/>
</dbReference>
<dbReference type="GO" id="GO:0003735">
    <property type="term" value="F:structural constituent of ribosome"/>
    <property type="evidence" value="ECO:0007669"/>
    <property type="project" value="InterPro"/>
</dbReference>
<dbReference type="GO" id="GO:0000049">
    <property type="term" value="F:tRNA binding"/>
    <property type="evidence" value="ECO:0007669"/>
    <property type="project" value="UniProtKB-KW"/>
</dbReference>
<dbReference type="GO" id="GO:0006412">
    <property type="term" value="P:translation"/>
    <property type="evidence" value="ECO:0007669"/>
    <property type="project" value="UniProtKB-UniRule"/>
</dbReference>
<dbReference type="CDD" id="cd01433">
    <property type="entry name" value="Ribosomal_L16_L10e"/>
    <property type="match status" value="1"/>
</dbReference>
<dbReference type="FunFam" id="3.90.1170.10:FF:000001">
    <property type="entry name" value="50S ribosomal protein L16"/>
    <property type="match status" value="1"/>
</dbReference>
<dbReference type="Gene3D" id="3.90.1170.10">
    <property type="entry name" value="Ribosomal protein L10e/L16"/>
    <property type="match status" value="1"/>
</dbReference>
<dbReference type="HAMAP" id="MF_01342">
    <property type="entry name" value="Ribosomal_uL16"/>
    <property type="match status" value="1"/>
</dbReference>
<dbReference type="InterPro" id="IPR047873">
    <property type="entry name" value="Ribosomal_uL16"/>
</dbReference>
<dbReference type="InterPro" id="IPR000114">
    <property type="entry name" value="Ribosomal_uL16_bact-type"/>
</dbReference>
<dbReference type="InterPro" id="IPR020798">
    <property type="entry name" value="Ribosomal_uL16_CS"/>
</dbReference>
<dbReference type="InterPro" id="IPR016180">
    <property type="entry name" value="Ribosomal_uL16_dom"/>
</dbReference>
<dbReference type="InterPro" id="IPR036920">
    <property type="entry name" value="Ribosomal_uL16_sf"/>
</dbReference>
<dbReference type="NCBIfam" id="TIGR01164">
    <property type="entry name" value="rplP_bact"/>
    <property type="match status" value="1"/>
</dbReference>
<dbReference type="PANTHER" id="PTHR12220">
    <property type="entry name" value="50S/60S RIBOSOMAL PROTEIN L16"/>
    <property type="match status" value="1"/>
</dbReference>
<dbReference type="PANTHER" id="PTHR12220:SF13">
    <property type="entry name" value="LARGE RIBOSOMAL SUBUNIT PROTEIN UL16M"/>
    <property type="match status" value="1"/>
</dbReference>
<dbReference type="Pfam" id="PF00252">
    <property type="entry name" value="Ribosomal_L16"/>
    <property type="match status" value="1"/>
</dbReference>
<dbReference type="PRINTS" id="PR00060">
    <property type="entry name" value="RIBOSOMALL16"/>
</dbReference>
<dbReference type="SUPFAM" id="SSF54686">
    <property type="entry name" value="Ribosomal protein L16p/L10e"/>
    <property type="match status" value="1"/>
</dbReference>
<dbReference type="PROSITE" id="PS00586">
    <property type="entry name" value="RIBOSOMAL_L16_1"/>
    <property type="match status" value="1"/>
</dbReference>
<dbReference type="PROSITE" id="PS00701">
    <property type="entry name" value="RIBOSOMAL_L16_2"/>
    <property type="match status" value="1"/>
</dbReference>
<reference key="1">
    <citation type="submission" date="2008-02" db="EMBL/GenBank/DDBJ databases">
        <title>Complete sequence of Shewanella woodyi ATCC 51908.</title>
        <authorList>
            <consortium name="US DOE Joint Genome Institute"/>
            <person name="Copeland A."/>
            <person name="Lucas S."/>
            <person name="Lapidus A."/>
            <person name="Glavina del Rio T."/>
            <person name="Dalin E."/>
            <person name="Tice H."/>
            <person name="Bruce D."/>
            <person name="Goodwin L."/>
            <person name="Pitluck S."/>
            <person name="Sims D."/>
            <person name="Brettin T."/>
            <person name="Detter J.C."/>
            <person name="Han C."/>
            <person name="Kuske C.R."/>
            <person name="Schmutz J."/>
            <person name="Larimer F."/>
            <person name="Land M."/>
            <person name="Hauser L."/>
            <person name="Kyrpides N."/>
            <person name="Lykidis A."/>
            <person name="Zhao J.-S."/>
            <person name="Richardson P."/>
        </authorList>
    </citation>
    <scope>NUCLEOTIDE SEQUENCE [LARGE SCALE GENOMIC DNA]</scope>
    <source>
        <strain>ATCC 51908 / MS32</strain>
    </source>
</reference>
<gene>
    <name evidence="1" type="primary">rplP</name>
    <name type="ordered locus">Swoo_4683</name>
</gene>
<protein>
    <recommendedName>
        <fullName evidence="1">Large ribosomal subunit protein uL16</fullName>
    </recommendedName>
    <alternativeName>
        <fullName evidence="2">50S ribosomal protein L16</fullName>
    </alternativeName>
</protein>
<organism>
    <name type="scientific">Shewanella woodyi (strain ATCC 51908 / MS32)</name>
    <dbReference type="NCBI Taxonomy" id="392500"/>
    <lineage>
        <taxon>Bacteria</taxon>
        <taxon>Pseudomonadati</taxon>
        <taxon>Pseudomonadota</taxon>
        <taxon>Gammaproteobacteria</taxon>
        <taxon>Alteromonadales</taxon>
        <taxon>Shewanellaceae</taxon>
        <taxon>Shewanella</taxon>
    </lineage>
</organism>
<accession>B1KMX6</accession>